<feature type="chain" id="PRO_0000206583" description="Dynamin-2B">
    <location>
        <begin position="1"/>
        <end position="920"/>
    </location>
</feature>
<feature type="domain" description="Dynamin-type G" evidence="5">
    <location>
        <begin position="35"/>
        <end position="303"/>
    </location>
</feature>
<feature type="domain" description="PH" evidence="3">
    <location>
        <begin position="579"/>
        <end position="703"/>
    </location>
</feature>
<feature type="domain" description="GED" evidence="4">
    <location>
        <begin position="737"/>
        <end position="830"/>
    </location>
</feature>
<feature type="region of interest" description="G1 motif" evidence="5">
    <location>
        <begin position="45"/>
        <end position="52"/>
    </location>
</feature>
<feature type="region of interest" description="G2 motif" evidence="5">
    <location>
        <begin position="71"/>
        <end position="73"/>
    </location>
</feature>
<feature type="region of interest" description="G3 motif" evidence="5">
    <location>
        <begin position="143"/>
        <end position="146"/>
    </location>
</feature>
<feature type="region of interest" description="G4 motif" evidence="5">
    <location>
        <begin position="204"/>
        <end position="207"/>
    </location>
</feature>
<feature type="region of interest" description="G5 motif" evidence="5">
    <location>
        <begin position="238"/>
        <end position="241"/>
    </location>
</feature>
<feature type="region of interest" description="Disordered" evidence="6">
    <location>
        <begin position="507"/>
        <end position="577"/>
    </location>
</feature>
<feature type="region of interest" description="Disordered" evidence="6">
    <location>
        <begin position="632"/>
        <end position="657"/>
    </location>
</feature>
<feature type="region of interest" description="Important for homodimerization" evidence="1">
    <location>
        <begin position="747"/>
        <end position="761"/>
    </location>
</feature>
<feature type="region of interest" description="Disordered" evidence="6">
    <location>
        <begin position="828"/>
        <end position="920"/>
    </location>
</feature>
<feature type="coiled-coil region" evidence="2">
    <location>
        <begin position="788"/>
        <end position="812"/>
    </location>
</feature>
<feature type="compositionally biased region" description="Basic and acidic residues" evidence="6">
    <location>
        <begin position="507"/>
        <end position="522"/>
    </location>
</feature>
<feature type="compositionally biased region" description="Polar residues" evidence="6">
    <location>
        <begin position="523"/>
        <end position="545"/>
    </location>
</feature>
<feature type="compositionally biased region" description="Basic and acidic residues" evidence="6">
    <location>
        <begin position="548"/>
        <end position="567"/>
    </location>
</feature>
<feature type="compositionally biased region" description="Basic and acidic residues" evidence="6">
    <location>
        <begin position="641"/>
        <end position="652"/>
    </location>
</feature>
<feature type="compositionally biased region" description="Polar residues" evidence="6">
    <location>
        <begin position="833"/>
        <end position="849"/>
    </location>
</feature>
<feature type="binding site" evidence="1">
    <location>
        <begin position="45"/>
        <end position="53"/>
    </location>
    <ligand>
        <name>GTP</name>
        <dbReference type="ChEBI" id="CHEBI:37565"/>
    </ligand>
</feature>
<feature type="binding site" evidence="1">
    <location>
        <begin position="204"/>
        <end position="210"/>
    </location>
    <ligand>
        <name>GTP</name>
        <dbReference type="ChEBI" id="CHEBI:37565"/>
    </ligand>
</feature>
<feature type="binding site" evidence="1">
    <location>
        <begin position="246"/>
        <end position="249"/>
    </location>
    <ligand>
        <name>GTP</name>
        <dbReference type="ChEBI" id="CHEBI:37565"/>
    </ligand>
</feature>
<feature type="modified residue" description="N-acetylmethionine" evidence="15">
    <location>
        <position position="1"/>
    </location>
</feature>
<sequence>MEAIDELSQLSDSMRQAASLLADEDPDETSSSRRPATSLNVVALGNVGAGKSAVLNSLIGHPVLPTGENGATRAPIIIDLSREESLSSKAIILQIDNKNQQVSASALRHSLQDRLSKGASGRGRDEIYLKLRTSTAPPLKLIDLPGLDQRIVDDSMIGEHAQHNDAILLVVVPASQASEISSSRALKIAKEYDPESTRTVGIISKIDQAAENPKSLAAVQALLSNQGPPKTTDIPWVALIGQSVSIASAQSGGSENSLETAWRAESESLKSILTGAPQSKLGRIALVDTLASQIRSRMKLRLPNILTGLQGKSQIVQDELARLGEQLVSSAEGTRAIALELCREFEDKFLLHLAGGEGSGWKVVASFEGNFPNRIKKLPLDRHFDLNNVKRIVLEADGYQPYLISPEKGLRSLIKTVLELAKDPARLCVDEVHRVLVDIVSASANATPGLGRYPPFKREVVAIASAALDGFKNEAKKMVVALVDMERAFVPPQHFIRLVQRRMERQRREEELKGRSSKKGQDAEQSLLNRATSPQPDGPSSTGGSLKSLRDKLMPQDKDKDKEKETPEVSGLKTAGPEGEITAGYLMKKSAKTNGWSRRWFVLNEKTGKLGYTKKQEERNFRGTVTLEECSIEEISDDEGEKSKSSKDKKSNGPDSKGPGLVFKITCRVPYKTVLKAHNALVLKAESMVDKNEWINKLQKVIQARGGQVGSASMRQSLSEGSLDKMVRKPVDPEEELRWMSQEVRGYVEAVLNSLAANVPKAVVLCQVEKSKEDMLNQLYSSISAIGNERIESLIQEDQNVKRRRDRYQKQSSLLSKLTRQLSIHDNRAAAASSWSDNSGTESSPRTNGGSSGEDWMNAFNAAASGPDSLKRYGSGGHSRRYSDPAQNGEDSSGSGGSSRRTTPNRLPPAPPQSGSSYRY</sequence>
<evidence type="ECO:0000250" key="1">
    <source>
        <dbReference type="UniProtKB" id="O00429"/>
    </source>
</evidence>
<evidence type="ECO:0000255" key="2"/>
<evidence type="ECO:0000255" key="3">
    <source>
        <dbReference type="PROSITE-ProRule" id="PRU00145"/>
    </source>
</evidence>
<evidence type="ECO:0000255" key="4">
    <source>
        <dbReference type="PROSITE-ProRule" id="PRU00720"/>
    </source>
</evidence>
<evidence type="ECO:0000255" key="5">
    <source>
        <dbReference type="PROSITE-ProRule" id="PRU01055"/>
    </source>
</evidence>
<evidence type="ECO:0000256" key="6">
    <source>
        <dbReference type="SAM" id="MobiDB-lite"/>
    </source>
</evidence>
<evidence type="ECO:0000269" key="7">
    <source>
    </source>
</evidence>
<evidence type="ECO:0000269" key="8">
    <source>
    </source>
</evidence>
<evidence type="ECO:0000269" key="9">
    <source>
    </source>
</evidence>
<evidence type="ECO:0000303" key="10">
    <source>
    </source>
</evidence>
<evidence type="ECO:0000303" key="11">
    <source>
    </source>
</evidence>
<evidence type="ECO:0000305" key="12"/>
<evidence type="ECO:0000312" key="13">
    <source>
        <dbReference type="Araport" id="AT1G59610"/>
    </source>
</evidence>
<evidence type="ECO:0000312" key="14">
    <source>
        <dbReference type="EMBL" id="AAF79753.1"/>
    </source>
</evidence>
<evidence type="ECO:0007744" key="15">
    <source>
    </source>
</evidence>
<organism>
    <name type="scientific">Arabidopsis thaliana</name>
    <name type="common">Mouse-ear cress</name>
    <dbReference type="NCBI Taxonomy" id="3702"/>
    <lineage>
        <taxon>Eukaryota</taxon>
        <taxon>Viridiplantae</taxon>
        <taxon>Streptophyta</taxon>
        <taxon>Embryophyta</taxon>
        <taxon>Tracheophyta</taxon>
        <taxon>Spermatophyta</taxon>
        <taxon>Magnoliopsida</taxon>
        <taxon>eudicotyledons</taxon>
        <taxon>Gunneridae</taxon>
        <taxon>Pentapetalae</taxon>
        <taxon>rosids</taxon>
        <taxon>malvids</taxon>
        <taxon>Brassicales</taxon>
        <taxon>Brassicaceae</taxon>
        <taxon>Camelineae</taxon>
        <taxon>Arabidopsis</taxon>
    </lineage>
</organism>
<dbReference type="EC" id="3.6.5.5" evidence="1"/>
<dbReference type="EMBL" id="AB026987">
    <property type="protein sequence ID" value="BAA77516.1"/>
    <property type="status" value="ALT_FRAME"/>
    <property type="molecule type" value="mRNA"/>
</dbReference>
<dbReference type="EMBL" id="AB028467">
    <property type="protein sequence ID" value="BAA88111.1"/>
    <property type="molecule type" value="mRNA"/>
</dbReference>
<dbReference type="EMBL" id="AB028469">
    <property type="protein sequence ID" value="BAA88113.1"/>
    <property type="status" value="ALT_SEQ"/>
    <property type="molecule type" value="Genomic_DNA"/>
</dbReference>
<dbReference type="EMBL" id="AC009317">
    <property type="protein sequence ID" value="AAF79753.1"/>
    <property type="status" value="ALT_SEQ"/>
    <property type="molecule type" value="Genomic_DNA"/>
</dbReference>
<dbReference type="EMBL" id="CP002684">
    <property type="protein sequence ID" value="AEE33594.1"/>
    <property type="molecule type" value="Genomic_DNA"/>
</dbReference>
<dbReference type="EMBL" id="AY049230">
    <property type="protein sequence ID" value="AAK83573.1"/>
    <property type="molecule type" value="mRNA"/>
</dbReference>
<dbReference type="EMBL" id="BT000772">
    <property type="protein sequence ID" value="AAN31911.1"/>
    <property type="molecule type" value="mRNA"/>
</dbReference>
<dbReference type="EMBL" id="BT009695">
    <property type="protein sequence ID" value="AAP88329.1"/>
    <property type="molecule type" value="mRNA"/>
</dbReference>
<dbReference type="PIR" id="H96619">
    <property type="entry name" value="H96619"/>
</dbReference>
<dbReference type="PIR" id="T52426">
    <property type="entry name" value="T52426"/>
</dbReference>
<dbReference type="RefSeq" id="NP_176170.1">
    <property type="nucleotide sequence ID" value="NM_104654.5"/>
</dbReference>
<dbReference type="SMR" id="Q9LQ55"/>
<dbReference type="BioGRID" id="27476">
    <property type="interactions" value="14"/>
</dbReference>
<dbReference type="DIP" id="DIP-53383N"/>
<dbReference type="FunCoup" id="Q9LQ55">
    <property type="interactions" value="2954"/>
</dbReference>
<dbReference type="IntAct" id="Q9LQ55">
    <property type="interactions" value="6"/>
</dbReference>
<dbReference type="STRING" id="3702.Q9LQ55"/>
<dbReference type="GlyGen" id="Q9LQ55">
    <property type="glycosylation" value="1 site"/>
</dbReference>
<dbReference type="iPTMnet" id="Q9LQ55"/>
<dbReference type="PaxDb" id="3702-AT1G59610.1"/>
<dbReference type="ProteomicsDB" id="224365"/>
<dbReference type="EnsemblPlants" id="AT1G59610.1">
    <property type="protein sequence ID" value="AT1G59610.1"/>
    <property type="gene ID" value="AT1G59610"/>
</dbReference>
<dbReference type="GeneID" id="842251"/>
<dbReference type="Gramene" id="AT1G59610.1">
    <property type="protein sequence ID" value="AT1G59610.1"/>
    <property type="gene ID" value="AT1G59610"/>
</dbReference>
<dbReference type="KEGG" id="ath:AT1G59610"/>
<dbReference type="Araport" id="AT1G59610"/>
<dbReference type="TAIR" id="AT1G59610">
    <property type="gene designation" value="DL3"/>
</dbReference>
<dbReference type="eggNOG" id="KOG0446">
    <property type="taxonomic scope" value="Eukaryota"/>
</dbReference>
<dbReference type="HOGENOM" id="CLU_016157_1_0_1"/>
<dbReference type="InParanoid" id="Q9LQ55"/>
<dbReference type="OMA" id="DAMIGEH"/>
<dbReference type="PhylomeDB" id="Q9LQ55"/>
<dbReference type="CD-CODE" id="4299E36E">
    <property type="entry name" value="Nucleolus"/>
</dbReference>
<dbReference type="PRO" id="PR:Q9LQ55"/>
<dbReference type="Proteomes" id="UP000006548">
    <property type="component" value="Chromosome 1"/>
</dbReference>
<dbReference type="ExpressionAtlas" id="Q9LQ55">
    <property type="expression patterns" value="baseline and differential"/>
</dbReference>
<dbReference type="GO" id="GO:0009504">
    <property type="term" value="C:cell plate"/>
    <property type="evidence" value="ECO:0000314"/>
    <property type="project" value="TAIR"/>
</dbReference>
<dbReference type="GO" id="GO:0045334">
    <property type="term" value="C:clathrin-coated endocytic vesicle"/>
    <property type="evidence" value="ECO:0000314"/>
    <property type="project" value="TAIR"/>
</dbReference>
<dbReference type="GO" id="GO:0005829">
    <property type="term" value="C:cytosol"/>
    <property type="evidence" value="ECO:0000314"/>
    <property type="project" value="TAIR"/>
</dbReference>
<dbReference type="GO" id="GO:0005874">
    <property type="term" value="C:microtubule"/>
    <property type="evidence" value="ECO:0007669"/>
    <property type="project" value="UniProtKB-KW"/>
</dbReference>
<dbReference type="GO" id="GO:0005634">
    <property type="term" value="C:nucleus"/>
    <property type="evidence" value="ECO:0007005"/>
    <property type="project" value="TAIR"/>
</dbReference>
<dbReference type="GO" id="GO:0000325">
    <property type="term" value="C:plant-type vacuole"/>
    <property type="evidence" value="ECO:0007005"/>
    <property type="project" value="TAIR"/>
</dbReference>
<dbReference type="GO" id="GO:0005886">
    <property type="term" value="C:plasma membrane"/>
    <property type="evidence" value="ECO:0000314"/>
    <property type="project" value="UniProtKB"/>
</dbReference>
<dbReference type="GO" id="GO:0009506">
    <property type="term" value="C:plasmodesma"/>
    <property type="evidence" value="ECO:0007005"/>
    <property type="project" value="TAIR"/>
</dbReference>
<dbReference type="GO" id="GO:0030276">
    <property type="term" value="F:clathrin binding"/>
    <property type="evidence" value="ECO:0000314"/>
    <property type="project" value="TAIR"/>
</dbReference>
<dbReference type="GO" id="GO:0005525">
    <property type="term" value="F:GTP binding"/>
    <property type="evidence" value="ECO:0007669"/>
    <property type="project" value="UniProtKB-KW"/>
</dbReference>
<dbReference type="GO" id="GO:0003924">
    <property type="term" value="F:GTPase activity"/>
    <property type="evidence" value="ECO:0000250"/>
    <property type="project" value="TAIR"/>
</dbReference>
<dbReference type="GO" id="GO:0072583">
    <property type="term" value="P:clathrin-dependent endocytosis"/>
    <property type="evidence" value="ECO:0000314"/>
    <property type="project" value="TAIR"/>
</dbReference>
<dbReference type="GO" id="GO:2000114">
    <property type="term" value="P:regulation of establishment of cell polarity"/>
    <property type="evidence" value="ECO:0000315"/>
    <property type="project" value="TAIR"/>
</dbReference>
<dbReference type="GO" id="GO:0048766">
    <property type="term" value="P:root hair initiation"/>
    <property type="evidence" value="ECO:0000315"/>
    <property type="project" value="TAIR"/>
</dbReference>
<dbReference type="CDD" id="cd08771">
    <property type="entry name" value="DLP_1"/>
    <property type="match status" value="1"/>
</dbReference>
<dbReference type="FunFam" id="1.20.120.1240:FF:000011">
    <property type="entry name" value="Dynamin-2A"/>
    <property type="match status" value="1"/>
</dbReference>
<dbReference type="FunFam" id="1.20.120.1240:FF:000017">
    <property type="entry name" value="Dynamin-2A"/>
    <property type="match status" value="1"/>
</dbReference>
<dbReference type="FunFam" id="2.30.29.30:FF:000212">
    <property type="entry name" value="Dynamin-2A"/>
    <property type="match status" value="1"/>
</dbReference>
<dbReference type="FunFam" id="3.40.50.300:FF:000722">
    <property type="entry name" value="Dynamin-2B isoform A"/>
    <property type="match status" value="1"/>
</dbReference>
<dbReference type="Gene3D" id="1.20.120.1240">
    <property type="entry name" value="Dynamin, middle domain"/>
    <property type="match status" value="1"/>
</dbReference>
<dbReference type="Gene3D" id="3.40.50.300">
    <property type="entry name" value="P-loop containing nucleotide triphosphate hydrolases"/>
    <property type="match status" value="1"/>
</dbReference>
<dbReference type="Gene3D" id="2.30.29.30">
    <property type="entry name" value="Pleckstrin-homology domain (PH domain)/Phosphotyrosine-binding domain (PTB)"/>
    <property type="match status" value="1"/>
</dbReference>
<dbReference type="InterPro" id="IPR022812">
    <property type="entry name" value="Dynamin"/>
</dbReference>
<dbReference type="InterPro" id="IPR001401">
    <property type="entry name" value="Dynamin_GTPase"/>
</dbReference>
<dbReference type="InterPro" id="IPR019762">
    <property type="entry name" value="Dynamin_GTPase_CS"/>
</dbReference>
<dbReference type="InterPro" id="IPR045063">
    <property type="entry name" value="Dynamin_N"/>
</dbReference>
<dbReference type="InterPro" id="IPR000375">
    <property type="entry name" value="Dynamin_stalk"/>
</dbReference>
<dbReference type="InterPro" id="IPR030381">
    <property type="entry name" value="G_DYNAMIN_dom"/>
</dbReference>
<dbReference type="InterPro" id="IPR003130">
    <property type="entry name" value="GED"/>
</dbReference>
<dbReference type="InterPro" id="IPR020850">
    <property type="entry name" value="GED_dom"/>
</dbReference>
<dbReference type="InterPro" id="IPR027417">
    <property type="entry name" value="P-loop_NTPase"/>
</dbReference>
<dbReference type="InterPro" id="IPR011993">
    <property type="entry name" value="PH-like_dom_sf"/>
</dbReference>
<dbReference type="InterPro" id="IPR001849">
    <property type="entry name" value="PH_domain"/>
</dbReference>
<dbReference type="PANTHER" id="PTHR11566">
    <property type="entry name" value="DYNAMIN"/>
    <property type="match status" value="1"/>
</dbReference>
<dbReference type="PANTHER" id="PTHR11566:SF57">
    <property type="entry name" value="DYNAMIN-2B"/>
    <property type="match status" value="1"/>
</dbReference>
<dbReference type="Pfam" id="PF01031">
    <property type="entry name" value="Dynamin_M"/>
    <property type="match status" value="1"/>
</dbReference>
<dbReference type="Pfam" id="PF00350">
    <property type="entry name" value="Dynamin_N"/>
    <property type="match status" value="1"/>
</dbReference>
<dbReference type="Pfam" id="PF02212">
    <property type="entry name" value="GED"/>
    <property type="match status" value="1"/>
</dbReference>
<dbReference type="Pfam" id="PF00169">
    <property type="entry name" value="PH"/>
    <property type="match status" value="1"/>
</dbReference>
<dbReference type="PRINTS" id="PR00195">
    <property type="entry name" value="DYNAMIN"/>
</dbReference>
<dbReference type="SMART" id="SM00053">
    <property type="entry name" value="DYNc"/>
    <property type="match status" value="1"/>
</dbReference>
<dbReference type="SMART" id="SM00233">
    <property type="entry name" value="PH"/>
    <property type="match status" value="1"/>
</dbReference>
<dbReference type="SUPFAM" id="SSF52540">
    <property type="entry name" value="P-loop containing nucleoside triphosphate hydrolases"/>
    <property type="match status" value="1"/>
</dbReference>
<dbReference type="SUPFAM" id="SSF50729">
    <property type="entry name" value="PH domain-like"/>
    <property type="match status" value="1"/>
</dbReference>
<dbReference type="PROSITE" id="PS00410">
    <property type="entry name" value="G_DYNAMIN_1"/>
    <property type="match status" value="1"/>
</dbReference>
<dbReference type="PROSITE" id="PS51718">
    <property type="entry name" value="G_DYNAMIN_2"/>
    <property type="match status" value="1"/>
</dbReference>
<dbReference type="PROSITE" id="PS51388">
    <property type="entry name" value="GED"/>
    <property type="match status" value="1"/>
</dbReference>
<dbReference type="PROSITE" id="PS50003">
    <property type="entry name" value="PH_DOMAIN"/>
    <property type="match status" value="1"/>
</dbReference>
<comment type="function">
    <text evidence="1 8 9">Putative microtubule-associated force-producing protein, able to bind and hydrolyze GTP (By similarity). Collaboratively with DRP1A, participates in clathrin-coated vesicle formation during endocytosis (PubMed:20231465). With DRP1A and PIP5K3, required for the precise coordination of polar ARAC3/ROP6 and ARAC4/ROP2 placement and subsequent root hair positioning during planar polarity formation in root hair-forming cells (PubMed:27251533).</text>
</comment>
<comment type="catalytic activity">
    <reaction evidence="1">
        <text>GTP + H2O = GDP + phosphate + H(+)</text>
        <dbReference type="Rhea" id="RHEA:19669"/>
        <dbReference type="ChEBI" id="CHEBI:15377"/>
        <dbReference type="ChEBI" id="CHEBI:15378"/>
        <dbReference type="ChEBI" id="CHEBI:37565"/>
        <dbReference type="ChEBI" id="CHEBI:43474"/>
        <dbReference type="ChEBI" id="CHEBI:58189"/>
        <dbReference type="EC" id="3.6.5.5"/>
    </reaction>
</comment>
<comment type="subunit">
    <text evidence="8">Interacts with DRP1A at the plasma membrane and in forming clathrin-coated vesicles (CCV).</text>
</comment>
<comment type="interaction">
    <interactant intactId="EBI-2355848">
        <id>Q9LQ55</id>
    </interactant>
    <interactant intactId="EBI-994234">
        <id>P42697</id>
        <label>DRP1A</label>
    </interactant>
    <organismsDiffer>false</organismsDiffer>
    <experiments>4</experiments>
</comment>
<comment type="subcellular location">
    <subcellularLocation>
        <location evidence="12">Cytoplasm</location>
        <location evidence="12">Cytoskeleton</location>
    </subcellularLocation>
    <subcellularLocation>
        <location evidence="8">Cytoplasmic vesicle</location>
        <location evidence="8">Clathrin-coated vesicle</location>
    </subcellularLocation>
    <subcellularLocation>
        <location evidence="8 9">Cell membrane</location>
    </subcellularLocation>
    <text evidence="9">Accumulates in a sterol-enriched, polar membrane domain during root hair initiation.</text>
</comment>
<comment type="tissue specificity">
    <text evidence="7">Ubiquitous. Preferentially expressed in siliques.</text>
</comment>
<comment type="disruption phenotype">
    <text evidence="9">Basal shift of ARAC3/ROP6 and ARAC4/ROP2 positioning in root hair-forming cells leading to basal shift of root hair positions.</text>
</comment>
<comment type="similarity">
    <text evidence="5">Belongs to the TRAFAC class dynamin-like GTPase superfamily. Dynamin/Fzo/YdjA family.</text>
</comment>
<comment type="sequence caution" evidence="12">
    <conflict type="erroneous gene model prediction">
        <sequence resource="EMBL-CDS" id="AAF79753"/>
    </conflict>
</comment>
<comment type="sequence caution" evidence="12">
    <conflict type="frameshift">
        <sequence resource="EMBL-CDS" id="BAA77516"/>
    </conflict>
</comment>
<comment type="sequence caution" evidence="12">
    <conflict type="erroneous gene model prediction">
        <sequence resource="EMBL-CDS" id="BAA88113"/>
    </conflict>
</comment>
<keyword id="KW-0007">Acetylation</keyword>
<keyword id="KW-1003">Cell membrane</keyword>
<keyword id="KW-0175">Coiled coil</keyword>
<keyword id="KW-0963">Cytoplasm</keyword>
<keyword id="KW-0968">Cytoplasmic vesicle</keyword>
<keyword id="KW-0206">Cytoskeleton</keyword>
<keyword id="KW-0342">GTP-binding</keyword>
<keyword id="KW-0378">Hydrolase</keyword>
<keyword id="KW-0472">Membrane</keyword>
<keyword id="KW-0493">Microtubule</keyword>
<keyword id="KW-0505">Motor protein</keyword>
<keyword id="KW-0547">Nucleotide-binding</keyword>
<keyword id="KW-1185">Reference proteome</keyword>
<proteinExistence type="evidence at protein level"/>
<protein>
    <recommendedName>
        <fullName evidence="11">Dynamin-2B</fullName>
        <ecNumber evidence="1">3.6.5.5</ecNumber>
    </recommendedName>
    <alternativeName>
        <fullName evidence="10">Dynamin-like protein 3</fullName>
    </alternativeName>
    <alternativeName>
        <fullName evidence="11">Dynamin-related protein 2B</fullName>
    </alternativeName>
</protein>
<gene>
    <name evidence="11" type="primary">DRP2B</name>
    <name evidence="10" type="synonym">ADL3</name>
    <name evidence="11" type="synonym">CF1</name>
    <name evidence="13" type="ordered locus">At1g59610</name>
    <name evidence="14" type="ORF">T30E16.17</name>
</gene>
<accession>Q9LQ55</accession>
<accession>Q9SLT3</accession>
<accession>Q9SLT4</accession>
<accession>Q9SXX3</accession>
<name>DRP2B_ARATH</name>
<reference key="1">
    <citation type="journal article" date="2000" name="J. Exp. Bot.">
        <title>A novel Arabidopsis thaliana dynamin-like protein containing the pleckstrin homology domain.</title>
        <authorList>
            <person name="Mikami K."/>
            <person name="Iuchi S."/>
            <person name="Yamaguchi-Shinozaki K."/>
            <person name="Shinozaki K."/>
        </authorList>
    </citation>
    <scope>NUCLEOTIDE SEQUENCE [MRNA]</scope>
    <scope>TISSUE SPECIFICITY</scope>
</reference>
<reference key="2">
    <citation type="journal article" date="1999" name="Gene">
        <title>Isolation and analysis of cDNA within a 300 kb Arabidopsis thaliana genomic region located around the 100 map unit of chromosome 1.</title>
        <authorList>
            <person name="Kato A."/>
            <person name="Suzuki M."/>
            <person name="Kuwahara A."/>
            <person name="Ooe H."/>
            <person name="Higano-Inaba K."/>
            <person name="Komeda Y."/>
        </authorList>
    </citation>
    <scope>NUCLEOTIDE SEQUENCE [GENOMIC DNA / MRNA]</scope>
    <source>
        <strain>cv. Columbia</strain>
    </source>
</reference>
<reference key="3">
    <citation type="journal article" date="2000" name="Nature">
        <title>Sequence and analysis of chromosome 1 of the plant Arabidopsis thaliana.</title>
        <authorList>
            <person name="Theologis A."/>
            <person name="Ecker J.R."/>
            <person name="Palm C.J."/>
            <person name="Federspiel N.A."/>
            <person name="Kaul S."/>
            <person name="White O."/>
            <person name="Alonso J."/>
            <person name="Altafi H."/>
            <person name="Araujo R."/>
            <person name="Bowman C.L."/>
            <person name="Brooks S.Y."/>
            <person name="Buehler E."/>
            <person name="Chan A."/>
            <person name="Chao Q."/>
            <person name="Chen H."/>
            <person name="Cheuk R.F."/>
            <person name="Chin C.W."/>
            <person name="Chung M.K."/>
            <person name="Conn L."/>
            <person name="Conway A.B."/>
            <person name="Conway A.R."/>
            <person name="Creasy T.H."/>
            <person name="Dewar K."/>
            <person name="Dunn P."/>
            <person name="Etgu P."/>
            <person name="Feldblyum T.V."/>
            <person name="Feng J.-D."/>
            <person name="Fong B."/>
            <person name="Fujii C.Y."/>
            <person name="Gill J.E."/>
            <person name="Goldsmith A.D."/>
            <person name="Haas B."/>
            <person name="Hansen N.F."/>
            <person name="Hughes B."/>
            <person name="Huizar L."/>
            <person name="Hunter J.L."/>
            <person name="Jenkins J."/>
            <person name="Johnson-Hopson C."/>
            <person name="Khan S."/>
            <person name="Khaykin E."/>
            <person name="Kim C.J."/>
            <person name="Koo H.L."/>
            <person name="Kremenetskaia I."/>
            <person name="Kurtz D.B."/>
            <person name="Kwan A."/>
            <person name="Lam B."/>
            <person name="Langin-Hooper S."/>
            <person name="Lee A."/>
            <person name="Lee J.M."/>
            <person name="Lenz C.A."/>
            <person name="Li J.H."/>
            <person name="Li Y.-P."/>
            <person name="Lin X."/>
            <person name="Liu S.X."/>
            <person name="Liu Z.A."/>
            <person name="Luros J.S."/>
            <person name="Maiti R."/>
            <person name="Marziali A."/>
            <person name="Militscher J."/>
            <person name="Miranda M."/>
            <person name="Nguyen M."/>
            <person name="Nierman W.C."/>
            <person name="Osborne B.I."/>
            <person name="Pai G."/>
            <person name="Peterson J."/>
            <person name="Pham P.K."/>
            <person name="Rizzo M."/>
            <person name="Rooney T."/>
            <person name="Rowley D."/>
            <person name="Sakano H."/>
            <person name="Salzberg S.L."/>
            <person name="Schwartz J.R."/>
            <person name="Shinn P."/>
            <person name="Southwick A.M."/>
            <person name="Sun H."/>
            <person name="Tallon L.J."/>
            <person name="Tambunga G."/>
            <person name="Toriumi M.J."/>
            <person name="Town C.D."/>
            <person name="Utterback T."/>
            <person name="Van Aken S."/>
            <person name="Vaysberg M."/>
            <person name="Vysotskaia V.S."/>
            <person name="Walker M."/>
            <person name="Wu D."/>
            <person name="Yu G."/>
            <person name="Fraser C.M."/>
            <person name="Venter J.C."/>
            <person name="Davis R.W."/>
        </authorList>
    </citation>
    <scope>NUCLEOTIDE SEQUENCE [LARGE SCALE GENOMIC DNA]</scope>
    <source>
        <strain>cv. Columbia</strain>
    </source>
</reference>
<reference key="4">
    <citation type="journal article" date="2017" name="Plant J.">
        <title>Araport11: a complete reannotation of the Arabidopsis thaliana reference genome.</title>
        <authorList>
            <person name="Cheng C.Y."/>
            <person name="Krishnakumar V."/>
            <person name="Chan A.P."/>
            <person name="Thibaud-Nissen F."/>
            <person name="Schobel S."/>
            <person name="Town C.D."/>
        </authorList>
    </citation>
    <scope>GENOME REANNOTATION</scope>
    <source>
        <strain>cv. Columbia</strain>
    </source>
</reference>
<reference key="5">
    <citation type="journal article" date="2003" name="Science">
        <title>Empirical analysis of transcriptional activity in the Arabidopsis genome.</title>
        <authorList>
            <person name="Yamada K."/>
            <person name="Lim J."/>
            <person name="Dale J.M."/>
            <person name="Chen H."/>
            <person name="Shinn P."/>
            <person name="Palm C.J."/>
            <person name="Southwick A.M."/>
            <person name="Wu H.C."/>
            <person name="Kim C.J."/>
            <person name="Nguyen M."/>
            <person name="Pham P.K."/>
            <person name="Cheuk R.F."/>
            <person name="Karlin-Newmann G."/>
            <person name="Liu S.X."/>
            <person name="Lam B."/>
            <person name="Sakano H."/>
            <person name="Wu T."/>
            <person name="Yu G."/>
            <person name="Miranda M."/>
            <person name="Quach H.L."/>
            <person name="Tripp M."/>
            <person name="Chang C.H."/>
            <person name="Lee J.M."/>
            <person name="Toriumi M.J."/>
            <person name="Chan M.M."/>
            <person name="Tang C.C."/>
            <person name="Onodera C.S."/>
            <person name="Deng J.M."/>
            <person name="Akiyama K."/>
            <person name="Ansari Y."/>
            <person name="Arakawa T."/>
            <person name="Banh J."/>
            <person name="Banno F."/>
            <person name="Bowser L."/>
            <person name="Brooks S.Y."/>
            <person name="Carninci P."/>
            <person name="Chao Q."/>
            <person name="Choy N."/>
            <person name="Enju A."/>
            <person name="Goldsmith A.D."/>
            <person name="Gurjal M."/>
            <person name="Hansen N.F."/>
            <person name="Hayashizaki Y."/>
            <person name="Johnson-Hopson C."/>
            <person name="Hsuan V.W."/>
            <person name="Iida K."/>
            <person name="Karnes M."/>
            <person name="Khan S."/>
            <person name="Koesema E."/>
            <person name="Ishida J."/>
            <person name="Jiang P.X."/>
            <person name="Jones T."/>
            <person name="Kawai J."/>
            <person name="Kamiya A."/>
            <person name="Meyers C."/>
            <person name="Nakajima M."/>
            <person name="Narusaka M."/>
            <person name="Seki M."/>
            <person name="Sakurai T."/>
            <person name="Satou M."/>
            <person name="Tamse R."/>
            <person name="Vaysberg M."/>
            <person name="Wallender E.K."/>
            <person name="Wong C."/>
            <person name="Yamamura Y."/>
            <person name="Yuan S."/>
            <person name="Shinozaki K."/>
            <person name="Davis R.W."/>
            <person name="Theologis A."/>
            <person name="Ecker J.R."/>
        </authorList>
    </citation>
    <scope>NUCLEOTIDE SEQUENCE [LARGE SCALE MRNA]</scope>
    <source>
        <strain>cv. Columbia</strain>
    </source>
</reference>
<reference key="6">
    <citation type="journal article" date="2003" name="Plant Mol. Biol.">
        <title>A unified nomenclature for Arabidopsis dynamin-related large GTPases based on homology and possible functions.</title>
        <authorList>
            <person name="Hong Z."/>
            <person name="Bednarek S.Y."/>
            <person name="Blumwald E."/>
            <person name="Hwang I."/>
            <person name="Jurgens G."/>
            <person name="Menzel D."/>
            <person name="Osteryoung K.W."/>
            <person name="Raikhel N.V."/>
            <person name="Shinozaki K."/>
            <person name="Tsutsumi N."/>
            <person name="Verma D.P.S."/>
        </authorList>
    </citation>
    <scope>GENE FAMILY</scope>
    <scope>NOMENCLATURE</scope>
</reference>
<reference key="7">
    <citation type="journal article" date="2009" name="Plant Physiol.">
        <title>Large-scale Arabidopsis phosphoproteome profiling reveals novel chloroplast kinase substrates and phosphorylation networks.</title>
        <authorList>
            <person name="Reiland S."/>
            <person name="Messerli G."/>
            <person name="Baerenfaller K."/>
            <person name="Gerrits B."/>
            <person name="Endler A."/>
            <person name="Grossmann J."/>
            <person name="Gruissem W."/>
            <person name="Baginsky S."/>
        </authorList>
    </citation>
    <scope>IDENTIFICATION BY MASS SPECTROMETRY [LARGE SCALE ANALYSIS]</scope>
</reference>
<reference key="8">
    <citation type="journal article" date="2010" name="Proc. Natl. Acad. Sci. U.S.A.">
        <title>Arabidopsis dynamin-related proteins DRP2B and DRP1A participate together in clathrin-coated vesicle formation during endocytosis.</title>
        <authorList>
            <person name="Fujimoto M."/>
            <person name="Arimura S."/>
            <person name="Ueda T."/>
            <person name="Takanashi H."/>
            <person name="Hayashi Y."/>
            <person name="Nakano A."/>
            <person name="Tsutsumi N."/>
        </authorList>
    </citation>
    <scope>FUNCTION</scope>
    <scope>SUBCELLULAR LOCATION</scope>
    <scope>INTERACTION WITH DRP1A</scope>
    <source>
        <strain>cv. Columbia</strain>
    </source>
</reference>
<reference key="9">
    <citation type="journal article" date="2012" name="Mol. Cell. Proteomics">
        <title>Comparative large-scale characterisation of plant vs. mammal proteins reveals similar and idiosyncratic N-alpha acetylation features.</title>
        <authorList>
            <person name="Bienvenut W.V."/>
            <person name="Sumpton D."/>
            <person name="Martinez A."/>
            <person name="Lilla S."/>
            <person name="Espagne C."/>
            <person name="Meinnel T."/>
            <person name="Giglione C."/>
        </authorList>
    </citation>
    <scope>ACETYLATION [LARGE SCALE ANALYSIS] AT MET-1</scope>
    <scope>IDENTIFICATION BY MASS SPECTROMETRY [LARGE SCALE ANALYSIS]</scope>
</reference>
<reference key="10">
    <citation type="journal article" date="2015" name="Nat. Plants">
        <title>Arabidopsis D6PK is a lipid domain-dependent mediator of root epidermal planar polarity.</title>
        <authorList>
            <person name="Stanislas T."/>
            <person name="Hueser A."/>
            <person name="Barbosa I.C.R."/>
            <person name="Kiefer C.S."/>
            <person name="Brackmann K."/>
            <person name="Pietra S."/>
            <person name="Gustavsson A."/>
            <person name="Zourelidou M."/>
            <person name="Schwechheimer C."/>
            <person name="Grebe M."/>
        </authorList>
    </citation>
    <scope>FUNCTION</scope>
    <scope>DISRUPTION PHENOTYPE</scope>
    <scope>SUBCELLULAR LOCATION</scope>
    <source>
        <strain>cv. Columbia</strain>
    </source>
</reference>